<organism>
    <name type="scientific">Pelotomaculum thermopropionicum (strain DSM 13744 / JCM 10971 / SI)</name>
    <dbReference type="NCBI Taxonomy" id="370438"/>
    <lineage>
        <taxon>Bacteria</taxon>
        <taxon>Bacillati</taxon>
        <taxon>Bacillota</taxon>
        <taxon>Clostridia</taxon>
        <taxon>Eubacteriales</taxon>
        <taxon>Desulfotomaculaceae</taxon>
        <taxon>Pelotomaculum</taxon>
    </lineage>
</organism>
<sequence length="146" mass="15581">MKLHELKPAPGARTKPTRRGQGIGSGMGKTAGRGHKGQKARSGGGVRPGFEGGQMPLQRRMPKRGFTNRFKKEIIAVNIEKLNRFENGTTVTPEALLAARVIKKTGDGVKILGNGNLEKSLTVQAHAFSSTARQKIEAAGGRAEVI</sequence>
<comment type="function">
    <text evidence="1">Binds to the 23S rRNA.</text>
</comment>
<comment type="subunit">
    <text evidence="1">Part of the 50S ribosomal subunit.</text>
</comment>
<comment type="similarity">
    <text evidence="1">Belongs to the universal ribosomal protein uL15 family.</text>
</comment>
<gene>
    <name evidence="1" type="primary">rplO</name>
    <name type="ordered locus">PTH_0338</name>
</gene>
<proteinExistence type="inferred from homology"/>
<accession>A5D5H4</accession>
<dbReference type="EMBL" id="AP009389">
    <property type="protein sequence ID" value="BAF58520.1"/>
    <property type="molecule type" value="Genomic_DNA"/>
</dbReference>
<dbReference type="SMR" id="A5D5H4"/>
<dbReference type="STRING" id="370438.PTH_0338"/>
<dbReference type="KEGG" id="pth:PTH_0338"/>
<dbReference type="eggNOG" id="COG0200">
    <property type="taxonomic scope" value="Bacteria"/>
</dbReference>
<dbReference type="HOGENOM" id="CLU_055188_4_2_9"/>
<dbReference type="Proteomes" id="UP000006556">
    <property type="component" value="Chromosome"/>
</dbReference>
<dbReference type="GO" id="GO:0022625">
    <property type="term" value="C:cytosolic large ribosomal subunit"/>
    <property type="evidence" value="ECO:0007669"/>
    <property type="project" value="TreeGrafter"/>
</dbReference>
<dbReference type="GO" id="GO:0019843">
    <property type="term" value="F:rRNA binding"/>
    <property type="evidence" value="ECO:0007669"/>
    <property type="project" value="UniProtKB-UniRule"/>
</dbReference>
<dbReference type="GO" id="GO:0003735">
    <property type="term" value="F:structural constituent of ribosome"/>
    <property type="evidence" value="ECO:0007669"/>
    <property type="project" value="InterPro"/>
</dbReference>
<dbReference type="GO" id="GO:0006412">
    <property type="term" value="P:translation"/>
    <property type="evidence" value="ECO:0007669"/>
    <property type="project" value="UniProtKB-UniRule"/>
</dbReference>
<dbReference type="Gene3D" id="3.100.10.10">
    <property type="match status" value="1"/>
</dbReference>
<dbReference type="HAMAP" id="MF_01341">
    <property type="entry name" value="Ribosomal_uL15"/>
    <property type="match status" value="1"/>
</dbReference>
<dbReference type="InterPro" id="IPR030878">
    <property type="entry name" value="Ribosomal_uL15"/>
</dbReference>
<dbReference type="InterPro" id="IPR021131">
    <property type="entry name" value="Ribosomal_uL15/eL18"/>
</dbReference>
<dbReference type="InterPro" id="IPR036227">
    <property type="entry name" value="Ribosomal_uL15/eL18_sf"/>
</dbReference>
<dbReference type="InterPro" id="IPR005749">
    <property type="entry name" value="Ribosomal_uL15_bac-type"/>
</dbReference>
<dbReference type="InterPro" id="IPR001196">
    <property type="entry name" value="Ribosomal_uL15_CS"/>
</dbReference>
<dbReference type="NCBIfam" id="TIGR01071">
    <property type="entry name" value="rplO_bact"/>
    <property type="match status" value="1"/>
</dbReference>
<dbReference type="PANTHER" id="PTHR12934">
    <property type="entry name" value="50S RIBOSOMAL PROTEIN L15"/>
    <property type="match status" value="1"/>
</dbReference>
<dbReference type="PANTHER" id="PTHR12934:SF11">
    <property type="entry name" value="LARGE RIBOSOMAL SUBUNIT PROTEIN UL15M"/>
    <property type="match status" value="1"/>
</dbReference>
<dbReference type="Pfam" id="PF00828">
    <property type="entry name" value="Ribosomal_L27A"/>
    <property type="match status" value="1"/>
</dbReference>
<dbReference type="SUPFAM" id="SSF52080">
    <property type="entry name" value="Ribosomal proteins L15p and L18e"/>
    <property type="match status" value="1"/>
</dbReference>
<dbReference type="PROSITE" id="PS00475">
    <property type="entry name" value="RIBOSOMAL_L15"/>
    <property type="match status" value="1"/>
</dbReference>
<keyword id="KW-1185">Reference proteome</keyword>
<keyword id="KW-0687">Ribonucleoprotein</keyword>
<keyword id="KW-0689">Ribosomal protein</keyword>
<keyword id="KW-0694">RNA-binding</keyword>
<keyword id="KW-0699">rRNA-binding</keyword>
<protein>
    <recommendedName>
        <fullName evidence="1">Large ribosomal subunit protein uL15</fullName>
    </recommendedName>
    <alternativeName>
        <fullName evidence="3">50S ribosomal protein L15</fullName>
    </alternativeName>
</protein>
<reference key="1">
    <citation type="journal article" date="2008" name="Genome Res.">
        <title>The genome of Pelotomaculum thermopropionicum reveals niche-associated evolution in anaerobic microbiota.</title>
        <authorList>
            <person name="Kosaka T."/>
            <person name="Kato S."/>
            <person name="Shimoyama T."/>
            <person name="Ishii S."/>
            <person name="Abe T."/>
            <person name="Watanabe K."/>
        </authorList>
    </citation>
    <scope>NUCLEOTIDE SEQUENCE [LARGE SCALE GENOMIC DNA]</scope>
    <source>
        <strain>DSM 13744 / JCM 10971 / SI</strain>
    </source>
</reference>
<feature type="chain" id="PRO_1000086721" description="Large ribosomal subunit protein uL15">
    <location>
        <begin position="1"/>
        <end position="146"/>
    </location>
</feature>
<feature type="region of interest" description="Disordered" evidence="2">
    <location>
        <begin position="1"/>
        <end position="66"/>
    </location>
</feature>
<feature type="compositionally biased region" description="Gly residues" evidence="2">
    <location>
        <begin position="21"/>
        <end position="31"/>
    </location>
</feature>
<feature type="compositionally biased region" description="Gly residues" evidence="2">
    <location>
        <begin position="42"/>
        <end position="52"/>
    </location>
</feature>
<evidence type="ECO:0000255" key="1">
    <source>
        <dbReference type="HAMAP-Rule" id="MF_01341"/>
    </source>
</evidence>
<evidence type="ECO:0000256" key="2">
    <source>
        <dbReference type="SAM" id="MobiDB-lite"/>
    </source>
</evidence>
<evidence type="ECO:0000305" key="3"/>
<name>RL15_PELTS</name>